<feature type="chain" id="PRO_0000229496" description="Isopentenyl-diphosphate delta-isomerase">
    <location>
        <begin position="1"/>
        <end position="349"/>
    </location>
</feature>
<feature type="binding site" evidence="1">
    <location>
        <begin position="6"/>
        <end position="7"/>
    </location>
    <ligand>
        <name>substrate</name>
    </ligand>
</feature>
<feature type="binding site" evidence="1">
    <location>
        <begin position="62"/>
        <end position="64"/>
    </location>
    <ligand>
        <name>FMN</name>
        <dbReference type="ChEBI" id="CHEBI:58210"/>
    </ligand>
</feature>
<feature type="binding site" evidence="1">
    <location>
        <position position="93"/>
    </location>
    <ligand>
        <name>FMN</name>
        <dbReference type="ChEBI" id="CHEBI:58210"/>
    </ligand>
</feature>
<feature type="binding site" evidence="1">
    <location>
        <position position="122"/>
    </location>
    <ligand>
        <name>FMN</name>
        <dbReference type="ChEBI" id="CHEBI:58210"/>
    </ligand>
</feature>
<feature type="binding site" evidence="1">
    <location>
        <position position="152"/>
    </location>
    <ligand>
        <name>substrate</name>
    </ligand>
</feature>
<feature type="binding site" evidence="1">
    <location>
        <position position="153"/>
    </location>
    <ligand>
        <name>Mg(2+)</name>
        <dbReference type="ChEBI" id="CHEBI:18420"/>
    </ligand>
</feature>
<feature type="binding site" evidence="1">
    <location>
        <position position="184"/>
    </location>
    <ligand>
        <name>FMN</name>
        <dbReference type="ChEBI" id="CHEBI:58210"/>
    </ligand>
</feature>
<feature type="binding site" evidence="1">
    <location>
        <position position="214"/>
    </location>
    <ligand>
        <name>FMN</name>
        <dbReference type="ChEBI" id="CHEBI:58210"/>
    </ligand>
</feature>
<feature type="binding site" evidence="1">
    <location>
        <begin position="258"/>
        <end position="259"/>
    </location>
    <ligand>
        <name>FMN</name>
        <dbReference type="ChEBI" id="CHEBI:58210"/>
    </ligand>
</feature>
<feature type="binding site" evidence="1">
    <location>
        <begin position="280"/>
        <end position="281"/>
    </location>
    <ligand>
        <name>FMN</name>
        <dbReference type="ChEBI" id="CHEBI:58210"/>
    </ligand>
</feature>
<reference key="1">
    <citation type="journal article" date="2003" name="Nature">
        <title>Genome sequence of Bacillus cereus and comparative analysis with Bacillus anthracis.</title>
        <authorList>
            <person name="Ivanova N."/>
            <person name="Sorokin A."/>
            <person name="Anderson I."/>
            <person name="Galleron N."/>
            <person name="Candelon B."/>
            <person name="Kapatral V."/>
            <person name="Bhattacharyya A."/>
            <person name="Reznik G."/>
            <person name="Mikhailova N."/>
            <person name="Lapidus A."/>
            <person name="Chu L."/>
            <person name="Mazur M."/>
            <person name="Goltsman E."/>
            <person name="Larsen N."/>
            <person name="D'Souza M."/>
            <person name="Walunas T."/>
            <person name="Grechkin Y."/>
            <person name="Pusch G."/>
            <person name="Haselkorn R."/>
            <person name="Fonstein M."/>
            <person name="Ehrlich S.D."/>
            <person name="Overbeek R."/>
            <person name="Kyrpides N.C."/>
        </authorList>
    </citation>
    <scope>NUCLEOTIDE SEQUENCE [LARGE SCALE GENOMIC DNA]</scope>
    <source>
        <strain>ATCC 14579 / DSM 31 / CCUG 7414 / JCM 2152 / NBRC 15305 / NCIMB 9373 / NCTC 2599 / NRRL B-3711</strain>
    </source>
</reference>
<accession>Q81FS0</accession>
<keyword id="KW-0963">Cytoplasm</keyword>
<keyword id="KW-0285">Flavoprotein</keyword>
<keyword id="KW-0288">FMN</keyword>
<keyword id="KW-0413">Isomerase</keyword>
<keyword id="KW-0414">Isoprene biosynthesis</keyword>
<keyword id="KW-0460">Magnesium</keyword>
<keyword id="KW-0479">Metal-binding</keyword>
<keyword id="KW-0521">NADP</keyword>
<keyword id="KW-1185">Reference proteome</keyword>
<gene>
    <name evidence="1" type="primary">fni</name>
    <name type="ordered locus">BC_1499</name>
</gene>
<proteinExistence type="inferred from homology"/>
<name>IDI2_BACCR</name>
<protein>
    <recommendedName>
        <fullName evidence="1">Isopentenyl-diphosphate delta-isomerase</fullName>
        <shortName evidence="1">IPP isomerase</shortName>
        <ecNumber evidence="1">5.3.3.2</ecNumber>
    </recommendedName>
    <alternativeName>
        <fullName evidence="1">Isopentenyl diphosphate:dimethylallyl diphosphate isomerase</fullName>
    </alternativeName>
    <alternativeName>
        <fullName evidence="1">Isopentenyl pyrophosphate isomerase</fullName>
    </alternativeName>
    <alternativeName>
        <fullName evidence="1">Type 2 isopentenyl diphosphate isomerase</fullName>
        <shortName evidence="1">IDI-2</shortName>
    </alternativeName>
</protein>
<comment type="function">
    <text evidence="1">Involved in the biosynthesis of isoprenoids. Catalyzes the 1,3-allylic rearrangement of the homoallylic substrate isopentenyl (IPP) to its allylic isomer, dimethylallyl diphosphate (DMAPP).</text>
</comment>
<comment type="catalytic activity">
    <reaction evidence="1">
        <text>isopentenyl diphosphate = dimethylallyl diphosphate</text>
        <dbReference type="Rhea" id="RHEA:23284"/>
        <dbReference type="ChEBI" id="CHEBI:57623"/>
        <dbReference type="ChEBI" id="CHEBI:128769"/>
        <dbReference type="EC" id="5.3.3.2"/>
    </reaction>
</comment>
<comment type="cofactor">
    <cofactor evidence="1">
        <name>FMN</name>
        <dbReference type="ChEBI" id="CHEBI:58210"/>
    </cofactor>
</comment>
<comment type="cofactor">
    <cofactor evidence="1">
        <name>NADPH</name>
        <dbReference type="ChEBI" id="CHEBI:57783"/>
    </cofactor>
</comment>
<comment type="cofactor">
    <cofactor evidence="1">
        <name>Mg(2+)</name>
        <dbReference type="ChEBI" id="CHEBI:18420"/>
    </cofactor>
</comment>
<comment type="subunit">
    <text evidence="1">Homooctamer. Dimer of tetramers.</text>
</comment>
<comment type="subcellular location">
    <subcellularLocation>
        <location evidence="1">Cytoplasm</location>
    </subcellularLocation>
</comment>
<comment type="similarity">
    <text evidence="1">Belongs to the IPP isomerase type 2 family.</text>
</comment>
<evidence type="ECO:0000255" key="1">
    <source>
        <dbReference type="HAMAP-Rule" id="MF_00354"/>
    </source>
</evidence>
<sequence length="349" mass="38339">MVRAKRKLDHIEYALSTGQSRTHGFHDIDFVHQSLPNSNYDTITCETKIGELSLSSPIFINAMTGGGGEKTLHINEQLAYVAKHHNLAMAVGSQMAALKDESEAASYKVIRKVNPNGIFFANLGSEATIEQAERAVDMIEANALQIHLNVIQELTMPEGDRDFTGVLQRIEKIVLNSKVPIIVKEVGFGMSKETMQQLVNVGVTAIDIGGQGGTNFAAVENERRQRMLSYFNNWGIQTATSIIEATSTNNNLSFIASGGIQTALDVAKAIALGANTTAFAGYFLRILMQDGIEKLVDEIELLHTDLKFIMTALGAKTIEELQSVPLVVKGETYHWLMQRGIDTAHYSRR</sequence>
<dbReference type="EC" id="5.3.3.2" evidence="1"/>
<dbReference type="EMBL" id="AE016877">
    <property type="protein sequence ID" value="AAP08479.1"/>
    <property type="molecule type" value="Genomic_DNA"/>
</dbReference>
<dbReference type="RefSeq" id="NP_831278.1">
    <property type="nucleotide sequence ID" value="NC_004722.1"/>
</dbReference>
<dbReference type="RefSeq" id="WP_000251036.1">
    <property type="nucleotide sequence ID" value="NZ_CP138336.1"/>
</dbReference>
<dbReference type="SMR" id="Q81FS0"/>
<dbReference type="STRING" id="226900.BC_1499"/>
<dbReference type="KEGG" id="bce:BC1499"/>
<dbReference type="PATRIC" id="fig|226900.8.peg.1476"/>
<dbReference type="HOGENOM" id="CLU_065515_0_0_9"/>
<dbReference type="OrthoDB" id="9795032at2"/>
<dbReference type="Proteomes" id="UP000001417">
    <property type="component" value="Chromosome"/>
</dbReference>
<dbReference type="GO" id="GO:0005737">
    <property type="term" value="C:cytoplasm"/>
    <property type="evidence" value="ECO:0007669"/>
    <property type="project" value="UniProtKB-SubCell"/>
</dbReference>
<dbReference type="GO" id="GO:0010181">
    <property type="term" value="F:FMN binding"/>
    <property type="evidence" value="ECO:0007669"/>
    <property type="project" value="UniProtKB-UniRule"/>
</dbReference>
<dbReference type="GO" id="GO:0004452">
    <property type="term" value="F:isopentenyl-diphosphate delta-isomerase activity"/>
    <property type="evidence" value="ECO:0007669"/>
    <property type="project" value="UniProtKB-UniRule"/>
</dbReference>
<dbReference type="GO" id="GO:0000287">
    <property type="term" value="F:magnesium ion binding"/>
    <property type="evidence" value="ECO:0007669"/>
    <property type="project" value="UniProtKB-UniRule"/>
</dbReference>
<dbReference type="GO" id="GO:0070402">
    <property type="term" value="F:NADPH binding"/>
    <property type="evidence" value="ECO:0007669"/>
    <property type="project" value="UniProtKB-UniRule"/>
</dbReference>
<dbReference type="GO" id="GO:0016491">
    <property type="term" value="F:oxidoreductase activity"/>
    <property type="evidence" value="ECO:0007669"/>
    <property type="project" value="InterPro"/>
</dbReference>
<dbReference type="GO" id="GO:0008299">
    <property type="term" value="P:isoprenoid biosynthetic process"/>
    <property type="evidence" value="ECO:0007669"/>
    <property type="project" value="UniProtKB-UniRule"/>
</dbReference>
<dbReference type="CDD" id="cd02811">
    <property type="entry name" value="IDI-2_FMN"/>
    <property type="match status" value="1"/>
</dbReference>
<dbReference type="FunFam" id="3.20.20.70:FF:000115">
    <property type="entry name" value="Isopentenyl-diphosphate delta-isomerase"/>
    <property type="match status" value="1"/>
</dbReference>
<dbReference type="Gene3D" id="3.20.20.70">
    <property type="entry name" value="Aldolase class I"/>
    <property type="match status" value="1"/>
</dbReference>
<dbReference type="HAMAP" id="MF_00354">
    <property type="entry name" value="Idi_2"/>
    <property type="match status" value="1"/>
</dbReference>
<dbReference type="InterPro" id="IPR013785">
    <property type="entry name" value="Aldolase_TIM"/>
</dbReference>
<dbReference type="InterPro" id="IPR000262">
    <property type="entry name" value="FMN-dep_DH"/>
</dbReference>
<dbReference type="InterPro" id="IPR011179">
    <property type="entry name" value="IPdP_isomerase"/>
</dbReference>
<dbReference type="NCBIfam" id="TIGR02151">
    <property type="entry name" value="IPP_isom_2"/>
    <property type="match status" value="1"/>
</dbReference>
<dbReference type="PANTHER" id="PTHR43665">
    <property type="entry name" value="ISOPENTENYL-DIPHOSPHATE DELTA-ISOMERASE"/>
    <property type="match status" value="1"/>
</dbReference>
<dbReference type="PANTHER" id="PTHR43665:SF1">
    <property type="entry name" value="ISOPENTENYL-DIPHOSPHATE DELTA-ISOMERASE"/>
    <property type="match status" value="1"/>
</dbReference>
<dbReference type="Pfam" id="PF01070">
    <property type="entry name" value="FMN_dh"/>
    <property type="match status" value="1"/>
</dbReference>
<dbReference type="PIRSF" id="PIRSF003314">
    <property type="entry name" value="IPP_isomerase"/>
    <property type="match status" value="1"/>
</dbReference>
<dbReference type="SMART" id="SM01240">
    <property type="entry name" value="IMPDH"/>
    <property type="match status" value="1"/>
</dbReference>
<dbReference type="SUPFAM" id="SSF51395">
    <property type="entry name" value="FMN-linked oxidoreductases"/>
    <property type="match status" value="1"/>
</dbReference>
<organism>
    <name type="scientific">Bacillus cereus (strain ATCC 14579 / DSM 31 / CCUG 7414 / JCM 2152 / NBRC 15305 / NCIMB 9373 / NCTC 2599 / NRRL B-3711)</name>
    <dbReference type="NCBI Taxonomy" id="226900"/>
    <lineage>
        <taxon>Bacteria</taxon>
        <taxon>Bacillati</taxon>
        <taxon>Bacillota</taxon>
        <taxon>Bacilli</taxon>
        <taxon>Bacillales</taxon>
        <taxon>Bacillaceae</taxon>
        <taxon>Bacillus</taxon>
        <taxon>Bacillus cereus group</taxon>
    </lineage>
</organism>